<keyword id="KW-0472">Membrane</keyword>
<keyword id="KW-1185">Reference proteome</keyword>
<keyword id="KW-0735">Signal-anchor</keyword>
<keyword id="KW-0812">Transmembrane</keyword>
<keyword id="KW-1133">Transmembrane helix</keyword>
<protein>
    <recommendedName>
        <fullName>Protein trichome birefringence-like 6</fullName>
    </recommendedName>
</protein>
<reference key="1">
    <citation type="journal article" date="2000" name="Nature">
        <title>Sequence and analysis of chromosome 3 of the plant Arabidopsis thaliana.</title>
        <authorList>
            <person name="Salanoubat M."/>
            <person name="Lemcke K."/>
            <person name="Rieger M."/>
            <person name="Ansorge W."/>
            <person name="Unseld M."/>
            <person name="Fartmann B."/>
            <person name="Valle G."/>
            <person name="Bloecker H."/>
            <person name="Perez-Alonso M."/>
            <person name="Obermaier B."/>
            <person name="Delseny M."/>
            <person name="Boutry M."/>
            <person name="Grivell L.A."/>
            <person name="Mache R."/>
            <person name="Puigdomenech P."/>
            <person name="De Simone V."/>
            <person name="Choisne N."/>
            <person name="Artiguenave F."/>
            <person name="Robert C."/>
            <person name="Brottier P."/>
            <person name="Wincker P."/>
            <person name="Cattolico L."/>
            <person name="Weissenbach J."/>
            <person name="Saurin W."/>
            <person name="Quetier F."/>
            <person name="Schaefer M."/>
            <person name="Mueller-Auer S."/>
            <person name="Gabel C."/>
            <person name="Fuchs M."/>
            <person name="Benes V."/>
            <person name="Wurmbach E."/>
            <person name="Drzonek H."/>
            <person name="Erfle H."/>
            <person name="Jordan N."/>
            <person name="Bangert S."/>
            <person name="Wiedelmann R."/>
            <person name="Kranz H."/>
            <person name="Voss H."/>
            <person name="Holland R."/>
            <person name="Brandt P."/>
            <person name="Nyakatura G."/>
            <person name="Vezzi A."/>
            <person name="D'Angelo M."/>
            <person name="Pallavicini A."/>
            <person name="Toppo S."/>
            <person name="Simionati B."/>
            <person name="Conrad A."/>
            <person name="Hornischer K."/>
            <person name="Kauer G."/>
            <person name="Loehnert T.-H."/>
            <person name="Nordsiek G."/>
            <person name="Reichelt J."/>
            <person name="Scharfe M."/>
            <person name="Schoen O."/>
            <person name="Bargues M."/>
            <person name="Terol J."/>
            <person name="Climent J."/>
            <person name="Navarro P."/>
            <person name="Collado C."/>
            <person name="Perez-Perez A."/>
            <person name="Ottenwaelder B."/>
            <person name="Duchemin D."/>
            <person name="Cooke R."/>
            <person name="Laudie M."/>
            <person name="Berger-Llauro C."/>
            <person name="Purnelle B."/>
            <person name="Masuy D."/>
            <person name="de Haan M."/>
            <person name="Maarse A.C."/>
            <person name="Alcaraz J.-P."/>
            <person name="Cottet A."/>
            <person name="Casacuberta E."/>
            <person name="Monfort A."/>
            <person name="Argiriou A."/>
            <person name="Flores M."/>
            <person name="Liguori R."/>
            <person name="Vitale D."/>
            <person name="Mannhaupt G."/>
            <person name="Haase D."/>
            <person name="Schoof H."/>
            <person name="Rudd S."/>
            <person name="Zaccaria P."/>
            <person name="Mewes H.-W."/>
            <person name="Mayer K.F.X."/>
            <person name="Kaul S."/>
            <person name="Town C.D."/>
            <person name="Koo H.L."/>
            <person name="Tallon L.J."/>
            <person name="Jenkins J."/>
            <person name="Rooney T."/>
            <person name="Rizzo M."/>
            <person name="Walts A."/>
            <person name="Utterback T."/>
            <person name="Fujii C.Y."/>
            <person name="Shea T.P."/>
            <person name="Creasy T.H."/>
            <person name="Haas B."/>
            <person name="Maiti R."/>
            <person name="Wu D."/>
            <person name="Peterson J."/>
            <person name="Van Aken S."/>
            <person name="Pai G."/>
            <person name="Militscher J."/>
            <person name="Sellers P."/>
            <person name="Gill J.E."/>
            <person name="Feldblyum T.V."/>
            <person name="Preuss D."/>
            <person name="Lin X."/>
            <person name="Nierman W.C."/>
            <person name="Salzberg S.L."/>
            <person name="White O."/>
            <person name="Venter J.C."/>
            <person name="Fraser C.M."/>
            <person name="Kaneko T."/>
            <person name="Nakamura Y."/>
            <person name="Sato S."/>
            <person name="Kato T."/>
            <person name="Asamizu E."/>
            <person name="Sasamoto S."/>
            <person name="Kimura T."/>
            <person name="Idesawa K."/>
            <person name="Kawashima K."/>
            <person name="Kishida Y."/>
            <person name="Kiyokawa C."/>
            <person name="Kohara M."/>
            <person name="Matsumoto M."/>
            <person name="Matsuno A."/>
            <person name="Muraki A."/>
            <person name="Nakayama S."/>
            <person name="Nakazaki N."/>
            <person name="Shinpo S."/>
            <person name="Takeuchi C."/>
            <person name="Wada T."/>
            <person name="Watanabe A."/>
            <person name="Yamada M."/>
            <person name="Yasuda M."/>
            <person name="Tabata S."/>
        </authorList>
    </citation>
    <scope>NUCLEOTIDE SEQUENCE [LARGE SCALE GENOMIC DNA]</scope>
    <source>
        <strain>cv. Columbia</strain>
    </source>
</reference>
<reference key="2">
    <citation type="journal article" date="2017" name="Plant J.">
        <title>Araport11: a complete reannotation of the Arabidopsis thaliana reference genome.</title>
        <authorList>
            <person name="Cheng C.Y."/>
            <person name="Krishnakumar V."/>
            <person name="Chan A.P."/>
            <person name="Thibaud-Nissen F."/>
            <person name="Schobel S."/>
            <person name="Town C.D."/>
        </authorList>
    </citation>
    <scope>GENOME REANNOTATION</scope>
    <source>
        <strain>cv. Columbia</strain>
    </source>
</reference>
<reference key="3">
    <citation type="submission" date="2006-07" db="EMBL/GenBank/DDBJ databases">
        <title>Large-scale analysis of RIKEN Arabidopsis full-length (RAFL) cDNAs.</title>
        <authorList>
            <person name="Totoki Y."/>
            <person name="Seki M."/>
            <person name="Ishida J."/>
            <person name="Nakajima M."/>
            <person name="Enju A."/>
            <person name="Kamiya A."/>
            <person name="Narusaka M."/>
            <person name="Shin-i T."/>
            <person name="Nakagawa M."/>
            <person name="Sakamoto N."/>
            <person name="Oishi K."/>
            <person name="Kohara Y."/>
            <person name="Kobayashi M."/>
            <person name="Toyoda A."/>
            <person name="Sakaki Y."/>
            <person name="Sakurai T."/>
            <person name="Iida K."/>
            <person name="Akiyama K."/>
            <person name="Satou M."/>
            <person name="Toyoda T."/>
            <person name="Konagaya A."/>
            <person name="Carninci P."/>
            <person name="Kawai J."/>
            <person name="Hayashizaki Y."/>
            <person name="Shinozaki K."/>
        </authorList>
    </citation>
    <scope>NUCLEOTIDE SEQUENCE [LARGE SCALE MRNA]</scope>
    <source>
        <strain>cv. Columbia</strain>
    </source>
</reference>
<reference key="4">
    <citation type="submission" date="2002-03" db="EMBL/GenBank/DDBJ databases">
        <title>Full-length cDNA from Arabidopsis thaliana.</title>
        <authorList>
            <person name="Brover V.V."/>
            <person name="Troukhan M.E."/>
            <person name="Alexandrov N.A."/>
            <person name="Lu Y.-P."/>
            <person name="Flavell R.B."/>
            <person name="Feldmann K.A."/>
        </authorList>
    </citation>
    <scope>NUCLEOTIDE SEQUENCE [LARGE SCALE MRNA]</scope>
</reference>
<reference key="5">
    <citation type="journal article" date="2007" name="Plant J.">
        <title>Arabidopsis ESK1 encodes a novel regulator of freezing tolerance.</title>
        <authorList>
            <person name="Xin Z."/>
            <person name="Mandaokar A."/>
            <person name="Chen J."/>
            <person name="Last R.L."/>
            <person name="Browse J."/>
        </authorList>
    </citation>
    <scope>GENE FAMILY</scope>
    <source>
        <strain>cv. Columbia</strain>
    </source>
</reference>
<reference key="6">
    <citation type="journal article" date="2010" name="Plant Physiol.">
        <title>TRICHOME BIREFRINGENCE and its homolog AT5G01360 encode plant-specific DUF231 proteins required for cellulose biosynthesis in Arabidopsis.</title>
        <authorList>
            <person name="Bischoff V."/>
            <person name="Nita S."/>
            <person name="Neumetzler L."/>
            <person name="Schindelasch D."/>
            <person name="Urbain A."/>
            <person name="Eshed R."/>
            <person name="Persson S."/>
            <person name="Delmer D."/>
            <person name="Scheible W.R."/>
        </authorList>
    </citation>
    <scope>GENE FAMILY</scope>
    <scope>NOMENCLATURE</scope>
</reference>
<reference key="7">
    <citation type="journal article" date="2010" name="Plant Signal. Behav.">
        <title>Involvement of TBL/DUF231 proteins into cell wall biology.</title>
        <authorList>
            <person name="Bischoff V."/>
            <person name="Selbig J."/>
            <person name="Scheible W.R."/>
        </authorList>
    </citation>
    <scope>3D-STRUCTURE MODELING</scope>
</reference>
<dbReference type="EMBL" id="AL162507">
    <property type="protein sequence ID" value="CAB82953.1"/>
    <property type="molecule type" value="Genomic_DNA"/>
</dbReference>
<dbReference type="EMBL" id="CP002686">
    <property type="protein sequence ID" value="AEE80346.1"/>
    <property type="molecule type" value="Genomic_DNA"/>
</dbReference>
<dbReference type="EMBL" id="AK229044">
    <property type="protein sequence ID" value="BAF00927.1"/>
    <property type="molecule type" value="mRNA"/>
</dbReference>
<dbReference type="EMBL" id="AY085065">
    <property type="protein sequence ID" value="AAM61621.1"/>
    <property type="molecule type" value="mRNA"/>
</dbReference>
<dbReference type="PIR" id="T48031">
    <property type="entry name" value="T48031"/>
</dbReference>
<dbReference type="RefSeq" id="NP_191798.1">
    <property type="nucleotide sequence ID" value="NM_116104.7"/>
</dbReference>
<dbReference type="SMR" id="Q9LZQ1"/>
<dbReference type="FunCoup" id="Q9LZQ1">
    <property type="interactions" value="87"/>
</dbReference>
<dbReference type="STRING" id="3702.Q9LZQ1"/>
<dbReference type="GlyGen" id="Q9LZQ1">
    <property type="glycosylation" value="1 site"/>
</dbReference>
<dbReference type="iPTMnet" id="Q9LZQ1"/>
<dbReference type="PaxDb" id="3702-AT3G62390.1"/>
<dbReference type="ProteomicsDB" id="233012"/>
<dbReference type="EnsemblPlants" id="AT3G62390.1">
    <property type="protein sequence ID" value="AT3G62390.1"/>
    <property type="gene ID" value="AT3G62390"/>
</dbReference>
<dbReference type="GeneID" id="825412"/>
<dbReference type="Gramene" id="AT3G62390.1">
    <property type="protein sequence ID" value="AT3G62390.1"/>
    <property type="gene ID" value="AT3G62390"/>
</dbReference>
<dbReference type="KEGG" id="ath:AT3G62390"/>
<dbReference type="Araport" id="AT3G62390"/>
<dbReference type="TAIR" id="AT3G62390">
    <property type="gene designation" value="TBL6"/>
</dbReference>
<dbReference type="eggNOG" id="ENOG502QQD3">
    <property type="taxonomic scope" value="Eukaryota"/>
</dbReference>
<dbReference type="HOGENOM" id="CLU_020953_5_3_1"/>
<dbReference type="InParanoid" id="Q9LZQ1"/>
<dbReference type="OMA" id="TAHWWNH"/>
<dbReference type="OrthoDB" id="630188at2759"/>
<dbReference type="PhylomeDB" id="Q9LZQ1"/>
<dbReference type="PRO" id="PR:Q9LZQ1"/>
<dbReference type="Proteomes" id="UP000006548">
    <property type="component" value="Chromosome 3"/>
</dbReference>
<dbReference type="ExpressionAtlas" id="Q9LZQ1">
    <property type="expression patterns" value="baseline and differential"/>
</dbReference>
<dbReference type="GO" id="GO:0016020">
    <property type="term" value="C:membrane"/>
    <property type="evidence" value="ECO:0007669"/>
    <property type="project" value="UniProtKB-SubCell"/>
</dbReference>
<dbReference type="GO" id="GO:0016413">
    <property type="term" value="F:O-acetyltransferase activity"/>
    <property type="evidence" value="ECO:0007669"/>
    <property type="project" value="InterPro"/>
</dbReference>
<dbReference type="InterPro" id="IPR029962">
    <property type="entry name" value="TBL"/>
</dbReference>
<dbReference type="InterPro" id="IPR026057">
    <property type="entry name" value="TBL_C"/>
</dbReference>
<dbReference type="InterPro" id="IPR025846">
    <property type="entry name" value="TBL_N"/>
</dbReference>
<dbReference type="PANTHER" id="PTHR32285:SF19">
    <property type="entry name" value="PROTEIN TRICHOME BIREFRINGENCE-LIKE 6"/>
    <property type="match status" value="1"/>
</dbReference>
<dbReference type="PANTHER" id="PTHR32285">
    <property type="entry name" value="PROTEIN TRICHOME BIREFRINGENCE-LIKE 9-RELATED"/>
    <property type="match status" value="1"/>
</dbReference>
<dbReference type="Pfam" id="PF13839">
    <property type="entry name" value="PC-Esterase"/>
    <property type="match status" value="1"/>
</dbReference>
<dbReference type="Pfam" id="PF14416">
    <property type="entry name" value="PMR5N"/>
    <property type="match status" value="1"/>
</dbReference>
<sequence length="475" mass="54638">MERQRSFSVKSTRVLAFIITIISSAIVFFTFFSSSLLKSNSSLYPTPEANFQIDLSPIAAISDSSVSPQASPILISTHFNSPENTSGSSKISVFEQKISGESLVKEVREIANLTSIKVIELPSNNGEDKKTEKRIEECDVTKGKWVYDSDYPLYTNASCPFIDEGFGCQSNGRLDLNYMNWRWEPQDCHAPRFNATKMLEMIRGKRLVFVGDSINRNQWESMLCLLFQAVKDPKRVYETHNRRITKEKGNYSFRFVDYKCTVEFYVTHFLVREGRARIGKKRRETLRIDAMDRTSSRWKGANILVFNTAHWWSHYKTKSGVNYYQEGDLIHPKLDVSTAFKKALQTWSSWVDKNVDPKKTRVFFRSAAPSHFSGGEWNSGGHCREANMPLNQTFKPSYSSKKSIVEDVLKQMRTPVTLLNVSGLSQYRIDAHPSIYGTKPENRRSRAVQDCSHWCLPGVPDTWNHFLYLHLLHKR</sequence>
<comment type="function">
    <text evidence="1 2">May act as a bridging protein that binds pectin and other cell wall polysaccharides. Probably involved in maintaining esterification of pectins (By similarity). May be involved in the specific O-acetylation of cell wall polymers (By similarity).</text>
</comment>
<comment type="subcellular location">
    <subcellularLocation>
        <location evidence="4">Membrane</location>
        <topology evidence="4">Single-pass type II membrane protein</topology>
    </subcellularLocation>
</comment>
<comment type="miscellaneous">
    <text evidence="5">Contains 2 motifs that are conserved in esterases, but it is unlikely that this protein belongs to the catalytically active pectin esterases.</text>
</comment>
<comment type="similarity">
    <text evidence="4">Belongs to the PC-esterase family. TBL subfamily.</text>
</comment>
<accession>Q9LZQ1</accession>
<gene>
    <name type="primary">TBL6</name>
    <name type="ordered locus">At3g62390</name>
    <name type="ORF">T12C14.90</name>
</gene>
<name>TBL6_ARATH</name>
<evidence type="ECO:0000250" key="1">
    <source>
        <dbReference type="UniProtKB" id="Q9FG35"/>
    </source>
</evidence>
<evidence type="ECO:0000250" key="2">
    <source>
        <dbReference type="UniProtKB" id="Q9LY46"/>
    </source>
</evidence>
<evidence type="ECO:0000255" key="3"/>
<evidence type="ECO:0000305" key="4"/>
<evidence type="ECO:0000305" key="5">
    <source>
    </source>
</evidence>
<feature type="chain" id="PRO_0000425372" description="Protein trichome birefringence-like 6">
    <location>
        <begin position="1"/>
        <end position="475"/>
    </location>
</feature>
<feature type="transmembrane region" description="Helical; Signal-anchor for type II membrane protein" evidence="3">
    <location>
        <begin position="14"/>
        <end position="34"/>
    </location>
</feature>
<feature type="short sequence motif" description="GDS motif">
    <location>
        <begin position="211"/>
        <end position="213"/>
    </location>
</feature>
<feature type="short sequence motif" description="DCXHWCLPGXXDXWN motif">
    <location>
        <begin position="450"/>
        <end position="464"/>
    </location>
</feature>
<organism>
    <name type="scientific">Arabidopsis thaliana</name>
    <name type="common">Mouse-ear cress</name>
    <dbReference type="NCBI Taxonomy" id="3702"/>
    <lineage>
        <taxon>Eukaryota</taxon>
        <taxon>Viridiplantae</taxon>
        <taxon>Streptophyta</taxon>
        <taxon>Embryophyta</taxon>
        <taxon>Tracheophyta</taxon>
        <taxon>Spermatophyta</taxon>
        <taxon>Magnoliopsida</taxon>
        <taxon>eudicotyledons</taxon>
        <taxon>Gunneridae</taxon>
        <taxon>Pentapetalae</taxon>
        <taxon>rosids</taxon>
        <taxon>malvids</taxon>
        <taxon>Brassicales</taxon>
        <taxon>Brassicaceae</taxon>
        <taxon>Camelineae</taxon>
        <taxon>Arabidopsis</taxon>
    </lineage>
</organism>
<proteinExistence type="evidence at transcript level"/>